<reference key="1">
    <citation type="journal article" date="2010" name="J. Bacteriol.">
        <title>Genome sequence of the deep-rooted Yersinia pestis strain Angola reveals new insights into the evolution and pangenome of the plague bacterium.</title>
        <authorList>
            <person name="Eppinger M."/>
            <person name="Worsham P.L."/>
            <person name="Nikolich M.P."/>
            <person name="Riley D.R."/>
            <person name="Sebastian Y."/>
            <person name="Mou S."/>
            <person name="Achtman M."/>
            <person name="Lindler L.E."/>
            <person name="Ravel J."/>
        </authorList>
    </citation>
    <scope>NUCLEOTIDE SEQUENCE [LARGE SCALE GENOMIC DNA]</scope>
    <source>
        <strain>Angola</strain>
    </source>
</reference>
<sequence>MSNIIKQIEQEQMKQDVPAFRPGDSVEVKVWVVEGSKKRLQAFEGVVIAIRNRGLHSAFTVRKISNGEGVERVFQTHSPVIDSITVKRRGAVRQAKLYYLRERTGKSARIKERLG</sequence>
<feature type="chain" id="PRO_1000193925" description="Large ribosomal subunit protein bL19">
    <location>
        <begin position="1"/>
        <end position="115"/>
    </location>
</feature>
<comment type="function">
    <text evidence="1">This protein is located at the 30S-50S ribosomal subunit interface and may play a role in the structure and function of the aminoacyl-tRNA binding site.</text>
</comment>
<comment type="similarity">
    <text evidence="1">Belongs to the bacterial ribosomal protein bL19 family.</text>
</comment>
<dbReference type="EMBL" id="CP000901">
    <property type="protein sequence ID" value="ABX85599.1"/>
    <property type="molecule type" value="Genomic_DNA"/>
</dbReference>
<dbReference type="RefSeq" id="WP_002209461.1">
    <property type="nucleotide sequence ID" value="NZ_CP009935.1"/>
</dbReference>
<dbReference type="SMR" id="A9R0U2"/>
<dbReference type="GeneID" id="96664344"/>
<dbReference type="KEGG" id="ypg:YpAngola_A0879"/>
<dbReference type="PATRIC" id="fig|349746.12.peg.1830"/>
<dbReference type="GO" id="GO:0022625">
    <property type="term" value="C:cytosolic large ribosomal subunit"/>
    <property type="evidence" value="ECO:0007669"/>
    <property type="project" value="TreeGrafter"/>
</dbReference>
<dbReference type="GO" id="GO:0003735">
    <property type="term" value="F:structural constituent of ribosome"/>
    <property type="evidence" value="ECO:0007669"/>
    <property type="project" value="InterPro"/>
</dbReference>
<dbReference type="GO" id="GO:0006412">
    <property type="term" value="P:translation"/>
    <property type="evidence" value="ECO:0007669"/>
    <property type="project" value="UniProtKB-UniRule"/>
</dbReference>
<dbReference type="FunFam" id="2.30.30.790:FF:000001">
    <property type="entry name" value="50S ribosomal protein L19"/>
    <property type="match status" value="1"/>
</dbReference>
<dbReference type="Gene3D" id="2.30.30.790">
    <property type="match status" value="1"/>
</dbReference>
<dbReference type="HAMAP" id="MF_00402">
    <property type="entry name" value="Ribosomal_bL19"/>
    <property type="match status" value="1"/>
</dbReference>
<dbReference type="InterPro" id="IPR001857">
    <property type="entry name" value="Ribosomal_bL19"/>
</dbReference>
<dbReference type="InterPro" id="IPR018257">
    <property type="entry name" value="Ribosomal_bL19_CS"/>
</dbReference>
<dbReference type="InterPro" id="IPR038657">
    <property type="entry name" value="Ribosomal_bL19_sf"/>
</dbReference>
<dbReference type="InterPro" id="IPR008991">
    <property type="entry name" value="Translation_prot_SH3-like_sf"/>
</dbReference>
<dbReference type="NCBIfam" id="TIGR01024">
    <property type="entry name" value="rplS_bact"/>
    <property type="match status" value="1"/>
</dbReference>
<dbReference type="PANTHER" id="PTHR15680:SF9">
    <property type="entry name" value="LARGE RIBOSOMAL SUBUNIT PROTEIN BL19M"/>
    <property type="match status" value="1"/>
</dbReference>
<dbReference type="PANTHER" id="PTHR15680">
    <property type="entry name" value="RIBOSOMAL PROTEIN L19"/>
    <property type="match status" value="1"/>
</dbReference>
<dbReference type="Pfam" id="PF01245">
    <property type="entry name" value="Ribosomal_L19"/>
    <property type="match status" value="1"/>
</dbReference>
<dbReference type="PIRSF" id="PIRSF002191">
    <property type="entry name" value="Ribosomal_L19"/>
    <property type="match status" value="1"/>
</dbReference>
<dbReference type="PRINTS" id="PR00061">
    <property type="entry name" value="RIBOSOMALL19"/>
</dbReference>
<dbReference type="SUPFAM" id="SSF50104">
    <property type="entry name" value="Translation proteins SH3-like domain"/>
    <property type="match status" value="1"/>
</dbReference>
<dbReference type="PROSITE" id="PS01015">
    <property type="entry name" value="RIBOSOMAL_L19"/>
    <property type="match status" value="1"/>
</dbReference>
<evidence type="ECO:0000255" key="1">
    <source>
        <dbReference type="HAMAP-Rule" id="MF_00402"/>
    </source>
</evidence>
<evidence type="ECO:0000305" key="2"/>
<protein>
    <recommendedName>
        <fullName evidence="1">Large ribosomal subunit protein bL19</fullName>
    </recommendedName>
    <alternativeName>
        <fullName evidence="2">50S ribosomal protein L19</fullName>
    </alternativeName>
</protein>
<organism>
    <name type="scientific">Yersinia pestis bv. Antiqua (strain Angola)</name>
    <dbReference type="NCBI Taxonomy" id="349746"/>
    <lineage>
        <taxon>Bacteria</taxon>
        <taxon>Pseudomonadati</taxon>
        <taxon>Pseudomonadota</taxon>
        <taxon>Gammaproteobacteria</taxon>
        <taxon>Enterobacterales</taxon>
        <taxon>Yersiniaceae</taxon>
        <taxon>Yersinia</taxon>
    </lineage>
</organism>
<keyword id="KW-0687">Ribonucleoprotein</keyword>
<keyword id="KW-0689">Ribosomal protein</keyword>
<accession>A9R0U2</accession>
<gene>
    <name evidence="1" type="primary">rplS</name>
    <name type="ordered locus">YpAngola_A0879</name>
</gene>
<name>RL19_YERPG</name>
<proteinExistence type="inferred from homology"/>